<proteinExistence type="inferred from homology"/>
<accession>Q12NY5</accession>
<keyword id="KW-0021">Allosteric enzyme</keyword>
<keyword id="KW-0067">ATP-binding</keyword>
<keyword id="KW-0963">Cytoplasm</keyword>
<keyword id="KW-0418">Kinase</keyword>
<keyword id="KW-0547">Nucleotide-binding</keyword>
<keyword id="KW-0665">Pyrimidine biosynthesis</keyword>
<keyword id="KW-1185">Reference proteome</keyword>
<keyword id="KW-0808">Transferase</keyword>
<sequence length="243" mass="26364">MSTNPKPAFRRILLKLSGEALMGEEGFGIDPKVLDRMAQEVKELVELGIQVGVVIGGGNLFRGEGLAKAGMNRVVGDHMGMLATVMNGLAMRDALHRAYVNARLMSAIPLKGVCDDYNWAEAISLLKSGRVVIFAAGTGNPFCTTDSAACLRGIEIEAEVVLKGTKVDGVYSADPMKDPDAVKHDVLSYNEVLERELKVMDLAAFTLARDHNMPILVFNMNKPGALRRVIMGEEEGTYIKNLN</sequence>
<dbReference type="EC" id="2.7.4.22" evidence="1"/>
<dbReference type="EMBL" id="CP000302">
    <property type="protein sequence ID" value="ABE54841.1"/>
    <property type="molecule type" value="Genomic_DNA"/>
</dbReference>
<dbReference type="RefSeq" id="WP_011495999.1">
    <property type="nucleotide sequence ID" value="NC_007954.1"/>
</dbReference>
<dbReference type="SMR" id="Q12NY5"/>
<dbReference type="STRING" id="318161.Sden_1556"/>
<dbReference type="KEGG" id="sdn:Sden_1556"/>
<dbReference type="eggNOG" id="COG0528">
    <property type="taxonomic scope" value="Bacteria"/>
</dbReference>
<dbReference type="HOGENOM" id="CLU_033861_0_0_6"/>
<dbReference type="OrthoDB" id="9807458at2"/>
<dbReference type="UniPathway" id="UPA00159">
    <property type="reaction ID" value="UER00275"/>
</dbReference>
<dbReference type="Proteomes" id="UP000001982">
    <property type="component" value="Chromosome"/>
</dbReference>
<dbReference type="GO" id="GO:0005829">
    <property type="term" value="C:cytosol"/>
    <property type="evidence" value="ECO:0007669"/>
    <property type="project" value="TreeGrafter"/>
</dbReference>
<dbReference type="GO" id="GO:0005524">
    <property type="term" value="F:ATP binding"/>
    <property type="evidence" value="ECO:0007669"/>
    <property type="project" value="UniProtKB-KW"/>
</dbReference>
<dbReference type="GO" id="GO:0033862">
    <property type="term" value="F:UMP kinase activity"/>
    <property type="evidence" value="ECO:0007669"/>
    <property type="project" value="UniProtKB-EC"/>
</dbReference>
<dbReference type="GO" id="GO:0044210">
    <property type="term" value="P:'de novo' CTP biosynthetic process"/>
    <property type="evidence" value="ECO:0007669"/>
    <property type="project" value="UniProtKB-UniRule"/>
</dbReference>
<dbReference type="GO" id="GO:0006225">
    <property type="term" value="P:UDP biosynthetic process"/>
    <property type="evidence" value="ECO:0007669"/>
    <property type="project" value="TreeGrafter"/>
</dbReference>
<dbReference type="CDD" id="cd04254">
    <property type="entry name" value="AAK_UMPK-PyrH-Ec"/>
    <property type="match status" value="1"/>
</dbReference>
<dbReference type="FunFam" id="3.40.1160.10:FF:000001">
    <property type="entry name" value="Uridylate kinase"/>
    <property type="match status" value="1"/>
</dbReference>
<dbReference type="Gene3D" id="3.40.1160.10">
    <property type="entry name" value="Acetylglutamate kinase-like"/>
    <property type="match status" value="1"/>
</dbReference>
<dbReference type="HAMAP" id="MF_01220_B">
    <property type="entry name" value="PyrH_B"/>
    <property type="match status" value="1"/>
</dbReference>
<dbReference type="InterPro" id="IPR036393">
    <property type="entry name" value="AceGlu_kinase-like_sf"/>
</dbReference>
<dbReference type="InterPro" id="IPR001048">
    <property type="entry name" value="Asp/Glu/Uridylate_kinase"/>
</dbReference>
<dbReference type="InterPro" id="IPR011817">
    <property type="entry name" value="Uridylate_kinase"/>
</dbReference>
<dbReference type="InterPro" id="IPR015963">
    <property type="entry name" value="Uridylate_kinase_bac"/>
</dbReference>
<dbReference type="NCBIfam" id="TIGR02075">
    <property type="entry name" value="pyrH_bact"/>
    <property type="match status" value="1"/>
</dbReference>
<dbReference type="PANTHER" id="PTHR42833">
    <property type="entry name" value="URIDYLATE KINASE"/>
    <property type="match status" value="1"/>
</dbReference>
<dbReference type="PANTHER" id="PTHR42833:SF4">
    <property type="entry name" value="URIDYLATE KINASE PUMPKIN, CHLOROPLASTIC"/>
    <property type="match status" value="1"/>
</dbReference>
<dbReference type="Pfam" id="PF00696">
    <property type="entry name" value="AA_kinase"/>
    <property type="match status" value="1"/>
</dbReference>
<dbReference type="PIRSF" id="PIRSF005650">
    <property type="entry name" value="Uridylate_kin"/>
    <property type="match status" value="1"/>
</dbReference>
<dbReference type="SUPFAM" id="SSF53633">
    <property type="entry name" value="Carbamate kinase-like"/>
    <property type="match status" value="1"/>
</dbReference>
<gene>
    <name evidence="1" type="primary">pyrH</name>
    <name type="ordered locus">Sden_1556</name>
</gene>
<comment type="function">
    <text evidence="1">Catalyzes the reversible phosphorylation of UMP to UDP.</text>
</comment>
<comment type="catalytic activity">
    <reaction evidence="1">
        <text>UMP + ATP = UDP + ADP</text>
        <dbReference type="Rhea" id="RHEA:24400"/>
        <dbReference type="ChEBI" id="CHEBI:30616"/>
        <dbReference type="ChEBI" id="CHEBI:57865"/>
        <dbReference type="ChEBI" id="CHEBI:58223"/>
        <dbReference type="ChEBI" id="CHEBI:456216"/>
        <dbReference type="EC" id="2.7.4.22"/>
    </reaction>
</comment>
<comment type="activity regulation">
    <text evidence="1">Allosterically activated by GTP. Inhibited by UTP.</text>
</comment>
<comment type="pathway">
    <text evidence="1">Pyrimidine metabolism; CTP biosynthesis via de novo pathway; UDP from UMP (UMPK route): step 1/1.</text>
</comment>
<comment type="subunit">
    <text evidence="1">Homohexamer.</text>
</comment>
<comment type="subcellular location">
    <subcellularLocation>
        <location evidence="1">Cytoplasm</location>
    </subcellularLocation>
</comment>
<comment type="similarity">
    <text evidence="1">Belongs to the UMP kinase family.</text>
</comment>
<reference key="1">
    <citation type="submission" date="2006-03" db="EMBL/GenBank/DDBJ databases">
        <title>Complete sequence of Shewanella denitrificans OS217.</title>
        <authorList>
            <consortium name="US DOE Joint Genome Institute"/>
            <person name="Copeland A."/>
            <person name="Lucas S."/>
            <person name="Lapidus A."/>
            <person name="Barry K."/>
            <person name="Detter J.C."/>
            <person name="Glavina del Rio T."/>
            <person name="Hammon N."/>
            <person name="Israni S."/>
            <person name="Dalin E."/>
            <person name="Tice H."/>
            <person name="Pitluck S."/>
            <person name="Brettin T."/>
            <person name="Bruce D."/>
            <person name="Han C."/>
            <person name="Tapia R."/>
            <person name="Gilna P."/>
            <person name="Kiss H."/>
            <person name="Schmutz J."/>
            <person name="Larimer F."/>
            <person name="Land M."/>
            <person name="Hauser L."/>
            <person name="Kyrpides N."/>
            <person name="Lykidis A."/>
            <person name="Richardson P."/>
        </authorList>
    </citation>
    <scope>NUCLEOTIDE SEQUENCE [LARGE SCALE GENOMIC DNA]</scope>
    <source>
        <strain>OS217 / ATCC BAA-1090 / DSM 15013</strain>
    </source>
</reference>
<organism>
    <name type="scientific">Shewanella denitrificans (strain OS217 / ATCC BAA-1090 / DSM 15013)</name>
    <dbReference type="NCBI Taxonomy" id="318161"/>
    <lineage>
        <taxon>Bacteria</taxon>
        <taxon>Pseudomonadati</taxon>
        <taxon>Pseudomonadota</taxon>
        <taxon>Gammaproteobacteria</taxon>
        <taxon>Alteromonadales</taxon>
        <taxon>Shewanellaceae</taxon>
        <taxon>Shewanella</taxon>
    </lineage>
</organism>
<protein>
    <recommendedName>
        <fullName evidence="1">Uridylate kinase</fullName>
        <shortName evidence="1">UK</shortName>
        <ecNumber evidence="1">2.7.4.22</ecNumber>
    </recommendedName>
    <alternativeName>
        <fullName evidence="1">Uridine monophosphate kinase</fullName>
        <shortName evidence="1">UMP kinase</shortName>
        <shortName evidence="1">UMPK</shortName>
    </alternativeName>
</protein>
<name>PYRH_SHEDO</name>
<feature type="chain" id="PRO_1000054007" description="Uridylate kinase">
    <location>
        <begin position="1"/>
        <end position="243"/>
    </location>
</feature>
<feature type="region of interest" description="Involved in allosteric activation by GTP" evidence="1">
    <location>
        <begin position="23"/>
        <end position="28"/>
    </location>
</feature>
<feature type="binding site" evidence="1">
    <location>
        <begin position="15"/>
        <end position="18"/>
    </location>
    <ligand>
        <name>ATP</name>
        <dbReference type="ChEBI" id="CHEBI:30616"/>
    </ligand>
</feature>
<feature type="binding site" evidence="1">
    <location>
        <position position="57"/>
    </location>
    <ligand>
        <name>UMP</name>
        <dbReference type="ChEBI" id="CHEBI:57865"/>
    </ligand>
</feature>
<feature type="binding site" evidence="1">
    <location>
        <position position="58"/>
    </location>
    <ligand>
        <name>ATP</name>
        <dbReference type="ChEBI" id="CHEBI:30616"/>
    </ligand>
</feature>
<feature type="binding site" evidence="1">
    <location>
        <position position="62"/>
    </location>
    <ligand>
        <name>ATP</name>
        <dbReference type="ChEBI" id="CHEBI:30616"/>
    </ligand>
</feature>
<feature type="binding site" evidence="1">
    <location>
        <position position="77"/>
    </location>
    <ligand>
        <name>UMP</name>
        <dbReference type="ChEBI" id="CHEBI:57865"/>
    </ligand>
</feature>
<feature type="binding site" evidence="1">
    <location>
        <begin position="138"/>
        <end position="145"/>
    </location>
    <ligand>
        <name>UMP</name>
        <dbReference type="ChEBI" id="CHEBI:57865"/>
    </ligand>
</feature>
<feature type="binding site" evidence="1">
    <location>
        <position position="165"/>
    </location>
    <ligand>
        <name>ATP</name>
        <dbReference type="ChEBI" id="CHEBI:30616"/>
    </ligand>
</feature>
<feature type="binding site" evidence="1">
    <location>
        <position position="171"/>
    </location>
    <ligand>
        <name>ATP</name>
        <dbReference type="ChEBI" id="CHEBI:30616"/>
    </ligand>
</feature>
<feature type="binding site" evidence="1">
    <location>
        <position position="174"/>
    </location>
    <ligand>
        <name>ATP</name>
        <dbReference type="ChEBI" id="CHEBI:30616"/>
    </ligand>
</feature>
<evidence type="ECO:0000255" key="1">
    <source>
        <dbReference type="HAMAP-Rule" id="MF_01220"/>
    </source>
</evidence>